<sequence>MAGGLMQLVAYGAQDVYLTGNPQITFWKVTYRRHTNFAMESIEQTFNGQADFGRRVTCTISRNGDLAYRTYLQITLPEIGQSLSSGAVYARWLDFPGEQLISQVEVEIGGQRIDRQYGDWMHIWNQLTLSKEQERGYFKMVGNTTQLTYVCDPNFAAIDGPCSANGVRQVCAPRDALPETTLYVPLQFWYCRNPGLALPLIALQYHEVKINLDIRNIEECLWAVSAIDGTGTKITDAYKQSLAAASLFVDYIFLDTDERRRMAQNPHEYLIEQLQFTGDESVGSSSNKIKLNLNHPCKELIWVVQPDANVDYCSSLTASTHLNNLLGAQPFNYTDAFDALPNAVHAFGGQASASGANAVINASGLFEDPFSNDIQSSVLDSGAATGADSGVSDAGTFVLAETALDMHCWGENPVIVAKLQLNGQDRFSEREGTYFDLVQPYQHHTRAPDSGINVYSFALHPEEHQPSGTCNFSRIDNATLQLVLSNATVQGVNTAKVRVYAVNYNVLRIMSGMGGLAYSN</sequence>
<name>MCP_PPV01</name>
<dbReference type="EMBL" id="EU006631">
    <property type="protein sequence ID" value="ABU23715.1"/>
    <property type="molecule type" value="Genomic_DNA"/>
</dbReference>
<dbReference type="EMBL" id="EU006623">
    <property type="protein sequence ID" value="ABU23707.1"/>
    <property type="molecule type" value="Genomic_DNA"/>
</dbReference>
<dbReference type="SMR" id="A7U6F0"/>
<dbReference type="GO" id="GO:0039629">
    <property type="term" value="C:T=219 icosahedral capsid"/>
    <property type="evidence" value="ECO:0000314"/>
    <property type="project" value="UniProtKB"/>
</dbReference>
<dbReference type="GO" id="GO:0005198">
    <property type="term" value="F:structural molecule activity"/>
    <property type="evidence" value="ECO:0007669"/>
    <property type="project" value="InterPro"/>
</dbReference>
<dbReference type="Gene3D" id="2.70.9.10">
    <property type="entry name" value="Adenovirus Type 2 Hexon, domain 4"/>
    <property type="match status" value="1"/>
</dbReference>
<dbReference type="Gene3D" id="2.70.9.20">
    <property type="entry name" value="Major capsid protein Vp54"/>
    <property type="match status" value="1"/>
</dbReference>
<dbReference type="InterPro" id="IPR031654">
    <property type="entry name" value="Capsid_N"/>
</dbReference>
<dbReference type="InterPro" id="IPR007542">
    <property type="entry name" value="MCP_C"/>
</dbReference>
<dbReference type="InterPro" id="IPR038519">
    <property type="entry name" value="MCP_C_sf"/>
</dbReference>
<dbReference type="InterPro" id="IPR016112">
    <property type="entry name" value="VP_dsDNA_II"/>
</dbReference>
<dbReference type="Pfam" id="PF16903">
    <property type="entry name" value="Capsid_N"/>
    <property type="match status" value="1"/>
</dbReference>
<dbReference type="Pfam" id="PF04451">
    <property type="entry name" value="Capsid_NCLDV"/>
    <property type="match status" value="1"/>
</dbReference>
<dbReference type="SUPFAM" id="SSF49749">
    <property type="entry name" value="Group II dsDNA viruses VP"/>
    <property type="match status" value="3"/>
</dbReference>
<keyword id="KW-0167">Capsid protein</keyword>
<keyword id="KW-1151">T=219 icosahedral capsid protein</keyword>
<keyword id="KW-0946">Virion</keyword>
<organismHost>
    <name type="scientific">Phaeocystis pouchetii</name>
    <dbReference type="NCBI Taxonomy" id="33659"/>
</organismHost>
<evidence type="ECO:0000269" key="1">
    <source>
    </source>
</evidence>
<evidence type="ECO:0000305" key="2"/>
<proteinExistence type="inferred from homology"/>
<feature type="chain" id="PRO_0000338011" description="Major capsid protein">
    <location>
        <begin position="1"/>
        <end position="520"/>
    </location>
</feature>
<organism>
    <name type="scientific">Phaeocystis pouchetii virus</name>
    <name type="common">PpV01</name>
    <dbReference type="NCBI Taxonomy" id="455365"/>
    <lineage>
        <taxon>Viruses</taxon>
        <taxon>Varidnaviria</taxon>
        <taxon>Bamfordvirae</taxon>
        <taxon>Nucleocytoviricota</taxon>
        <taxon>Megaviricetes</taxon>
        <taxon>Algavirales</taxon>
        <taxon>Phycodnaviridae</taxon>
    </lineage>
</organism>
<comment type="function">
    <text evidence="1">Major capsid protein that self assembles to form an icosahedral capsid with a T=219 symmetry.</text>
</comment>
<comment type="subcellular location">
    <subcellularLocation>
        <location evidence="2">Virion</location>
    </subcellularLocation>
</comment>
<comment type="similarity">
    <text evidence="2">Belongs to the NCLDV major capsid protein family.</text>
</comment>
<accession>A7U6F0</accession>
<accession>A7U6E2</accession>
<protein>
    <recommendedName>
        <fullName>Major capsid protein</fullName>
        <shortName>MCP</shortName>
    </recommendedName>
</protein>
<gene>
    <name type="primary">MCP</name>
</gene>
<reference key="1">
    <citation type="journal article" date="2008" name="Appl. Environ. Microbiol.">
        <title>Phylogenetic analysis of members of the Phycodnaviridae virus family, using amplified fragments of the major capsid protein gene.</title>
        <authorList>
            <person name="Larsen J.B."/>
            <person name="Larsen A."/>
            <person name="Bratbak G."/>
            <person name="Sandaa R.A."/>
        </authorList>
    </citation>
    <scope>NUCLEOTIDE SEQUENCE [GENOMIC DNA]</scope>
</reference>
<reference key="2">
    <citation type="journal article" date="2005" name="J. Virol.">
        <title>The marine algal virus PpV01 has an icosahedral capsid with T=219 quasisymmetry.</title>
        <authorList>
            <person name="Yan X."/>
            <person name="Chipman P.R."/>
            <person name="Castberg T."/>
            <person name="Bratbak G."/>
            <person name="Baker T.S."/>
        </authorList>
    </citation>
    <scope>FUNCTION</scope>
</reference>